<reference key="1">
    <citation type="journal article" date="2008" name="J. Bacteriol.">
        <title>Insights into plant cell wall degradation from the genome sequence of the soil bacterium Cellvibrio japonicus.</title>
        <authorList>
            <person name="DeBoy R.T."/>
            <person name="Mongodin E.F."/>
            <person name="Fouts D.E."/>
            <person name="Tailford L.E."/>
            <person name="Khouri H."/>
            <person name="Emerson J.B."/>
            <person name="Mohamoud Y."/>
            <person name="Watkins K."/>
            <person name="Henrissat B."/>
            <person name="Gilbert H.J."/>
            <person name="Nelson K.E."/>
        </authorList>
    </citation>
    <scope>NUCLEOTIDE SEQUENCE [LARGE SCALE GENOMIC DNA]</scope>
    <source>
        <strain>Ueda107</strain>
    </source>
</reference>
<sequence>MNPIIKKFQYGNQTVTLETGRIARQATGAVLVSIGEVAVLCTVVGAKEASPGQDFFPLSVHYQEKAYAAGRIPGGYFKREGRPSEKETLTSRLIDRPIRPLFPEGFLNEVQVICTVVSTDKKQDPDIAAMIGTSAALAVSGIPFNGPIGAARVGYTQGEGYILNPSYKQLETSELDMVVAGTKDAVLMVESEAKELPEDIMLGAVLYGHQEMQAVIQACAELARDAGKARWDWQPVPENTELKTAIKAAFGVAIGDAYRITDKAERYNRLGELRSEAVAQFATEESGISADAVKSLFGTLEYNIVRSRIVANEPRIDGRDNKTVRPITVDVGVLPKAHGSALFTRGETQALVVATLGNARDVQIIDQLEGEKKEAFLLHYNFPPYSVGECGRMGSTGRREIGHGRLAKRGVQAVLPKAESFPYTLRVVSEITESNGSSSMASVCGSSLALMDAGVPLKAPVAGIAMGLVKEDNGFAVLTDILGDEDHLGDMDFKVAGTTSGVTALQMDIKIEGITEEIMEIALEQALAARLHILGEMNKVLSQSRTAVSENAPRFETIKIHPDKIRDIIGKGGATIRSITEETNSSIDIDDDGTVKVYADDNEALQAALNRIGAIVAEAEIGAIYEGTVVRIVDFGAFVNFLPGKDGLVHISQIADERVNNVSDYLKEGQVVKVKCLDVDQRGRIKLSIKEALAEEAGTAPAAEPVADAE</sequence>
<accession>B3PIA0</accession>
<evidence type="ECO:0000255" key="1">
    <source>
        <dbReference type="HAMAP-Rule" id="MF_01595"/>
    </source>
</evidence>
<name>PNP_CELJU</name>
<comment type="function">
    <text evidence="1">Involved in mRNA degradation. Catalyzes the phosphorolysis of single-stranded polyribonucleotides processively in the 3'- to 5'-direction.</text>
</comment>
<comment type="catalytic activity">
    <reaction evidence="1">
        <text>RNA(n+1) + phosphate = RNA(n) + a ribonucleoside 5'-diphosphate</text>
        <dbReference type="Rhea" id="RHEA:22096"/>
        <dbReference type="Rhea" id="RHEA-COMP:14527"/>
        <dbReference type="Rhea" id="RHEA-COMP:17342"/>
        <dbReference type="ChEBI" id="CHEBI:43474"/>
        <dbReference type="ChEBI" id="CHEBI:57930"/>
        <dbReference type="ChEBI" id="CHEBI:140395"/>
        <dbReference type="EC" id="2.7.7.8"/>
    </reaction>
</comment>
<comment type="cofactor">
    <cofactor evidence="1">
        <name>Mg(2+)</name>
        <dbReference type="ChEBI" id="CHEBI:18420"/>
    </cofactor>
</comment>
<comment type="subunit">
    <text evidence="1">Component of the RNA degradosome, which is a multiprotein complex involved in RNA processing and mRNA degradation.</text>
</comment>
<comment type="subcellular location">
    <subcellularLocation>
        <location evidence="1">Cytoplasm</location>
    </subcellularLocation>
</comment>
<comment type="similarity">
    <text evidence="1">Belongs to the polyribonucleotide nucleotidyltransferase family.</text>
</comment>
<organism>
    <name type="scientific">Cellvibrio japonicus (strain Ueda107)</name>
    <name type="common">Pseudomonas fluorescens subsp. cellulosa</name>
    <dbReference type="NCBI Taxonomy" id="498211"/>
    <lineage>
        <taxon>Bacteria</taxon>
        <taxon>Pseudomonadati</taxon>
        <taxon>Pseudomonadota</taxon>
        <taxon>Gammaproteobacteria</taxon>
        <taxon>Cellvibrionales</taxon>
        <taxon>Cellvibrionaceae</taxon>
        <taxon>Cellvibrio</taxon>
    </lineage>
</organism>
<keyword id="KW-0963">Cytoplasm</keyword>
<keyword id="KW-0460">Magnesium</keyword>
<keyword id="KW-0479">Metal-binding</keyword>
<keyword id="KW-0548">Nucleotidyltransferase</keyword>
<keyword id="KW-1185">Reference proteome</keyword>
<keyword id="KW-0694">RNA-binding</keyword>
<keyword id="KW-0808">Transferase</keyword>
<protein>
    <recommendedName>
        <fullName evidence="1">Polyribonucleotide nucleotidyltransferase</fullName>
        <ecNumber evidence="1">2.7.7.8</ecNumber>
    </recommendedName>
    <alternativeName>
        <fullName evidence="1">Polynucleotide phosphorylase</fullName>
        <shortName evidence="1">PNPase</shortName>
    </alternativeName>
</protein>
<proteinExistence type="inferred from homology"/>
<feature type="chain" id="PRO_1000147899" description="Polyribonucleotide nucleotidyltransferase">
    <location>
        <begin position="1"/>
        <end position="710"/>
    </location>
</feature>
<feature type="domain" description="KH" evidence="1">
    <location>
        <begin position="553"/>
        <end position="612"/>
    </location>
</feature>
<feature type="domain" description="S1 motif" evidence="1">
    <location>
        <begin position="622"/>
        <end position="690"/>
    </location>
</feature>
<feature type="binding site" evidence="1">
    <location>
        <position position="486"/>
    </location>
    <ligand>
        <name>Mg(2+)</name>
        <dbReference type="ChEBI" id="CHEBI:18420"/>
    </ligand>
</feature>
<feature type="binding site" evidence="1">
    <location>
        <position position="492"/>
    </location>
    <ligand>
        <name>Mg(2+)</name>
        <dbReference type="ChEBI" id="CHEBI:18420"/>
    </ligand>
</feature>
<gene>
    <name evidence="1" type="primary">pnp</name>
    <name type="ordered locus">CJA_0440</name>
</gene>
<dbReference type="EC" id="2.7.7.8" evidence="1"/>
<dbReference type="EMBL" id="CP000934">
    <property type="protein sequence ID" value="ACE82892.1"/>
    <property type="molecule type" value="Genomic_DNA"/>
</dbReference>
<dbReference type="RefSeq" id="WP_012486121.1">
    <property type="nucleotide sequence ID" value="NC_010995.1"/>
</dbReference>
<dbReference type="SMR" id="B3PIA0"/>
<dbReference type="STRING" id="498211.CJA_0440"/>
<dbReference type="KEGG" id="cja:CJA_0440"/>
<dbReference type="eggNOG" id="COG1185">
    <property type="taxonomic scope" value="Bacteria"/>
</dbReference>
<dbReference type="HOGENOM" id="CLU_004217_2_2_6"/>
<dbReference type="OrthoDB" id="9804305at2"/>
<dbReference type="Proteomes" id="UP000001036">
    <property type="component" value="Chromosome"/>
</dbReference>
<dbReference type="GO" id="GO:0005829">
    <property type="term" value="C:cytosol"/>
    <property type="evidence" value="ECO:0007669"/>
    <property type="project" value="TreeGrafter"/>
</dbReference>
<dbReference type="GO" id="GO:0000175">
    <property type="term" value="F:3'-5'-RNA exonuclease activity"/>
    <property type="evidence" value="ECO:0007669"/>
    <property type="project" value="TreeGrafter"/>
</dbReference>
<dbReference type="GO" id="GO:0000287">
    <property type="term" value="F:magnesium ion binding"/>
    <property type="evidence" value="ECO:0007669"/>
    <property type="project" value="UniProtKB-UniRule"/>
</dbReference>
<dbReference type="GO" id="GO:0004654">
    <property type="term" value="F:polyribonucleotide nucleotidyltransferase activity"/>
    <property type="evidence" value="ECO:0007669"/>
    <property type="project" value="UniProtKB-UniRule"/>
</dbReference>
<dbReference type="GO" id="GO:0003723">
    <property type="term" value="F:RNA binding"/>
    <property type="evidence" value="ECO:0007669"/>
    <property type="project" value="UniProtKB-UniRule"/>
</dbReference>
<dbReference type="GO" id="GO:0006402">
    <property type="term" value="P:mRNA catabolic process"/>
    <property type="evidence" value="ECO:0007669"/>
    <property type="project" value="UniProtKB-UniRule"/>
</dbReference>
<dbReference type="GO" id="GO:0006396">
    <property type="term" value="P:RNA processing"/>
    <property type="evidence" value="ECO:0007669"/>
    <property type="project" value="InterPro"/>
</dbReference>
<dbReference type="CDD" id="cd02393">
    <property type="entry name" value="KH-I_PNPase"/>
    <property type="match status" value="1"/>
</dbReference>
<dbReference type="CDD" id="cd11363">
    <property type="entry name" value="RNase_PH_PNPase_1"/>
    <property type="match status" value="1"/>
</dbReference>
<dbReference type="CDD" id="cd11364">
    <property type="entry name" value="RNase_PH_PNPase_2"/>
    <property type="match status" value="1"/>
</dbReference>
<dbReference type="CDD" id="cd04472">
    <property type="entry name" value="S1_PNPase"/>
    <property type="match status" value="1"/>
</dbReference>
<dbReference type="FunFam" id="2.40.50.140:FF:000023">
    <property type="entry name" value="Polyribonucleotide nucleotidyltransferase"/>
    <property type="match status" value="1"/>
</dbReference>
<dbReference type="FunFam" id="3.30.1370.10:FF:000001">
    <property type="entry name" value="Polyribonucleotide nucleotidyltransferase"/>
    <property type="match status" value="1"/>
</dbReference>
<dbReference type="FunFam" id="3.30.230.70:FF:000001">
    <property type="entry name" value="Polyribonucleotide nucleotidyltransferase"/>
    <property type="match status" value="1"/>
</dbReference>
<dbReference type="FunFam" id="3.30.230.70:FF:000002">
    <property type="entry name" value="Polyribonucleotide nucleotidyltransferase"/>
    <property type="match status" value="1"/>
</dbReference>
<dbReference type="Gene3D" id="3.30.230.70">
    <property type="entry name" value="GHMP Kinase, N-terminal domain"/>
    <property type="match status" value="2"/>
</dbReference>
<dbReference type="Gene3D" id="3.30.1370.10">
    <property type="entry name" value="K Homology domain, type 1"/>
    <property type="match status" value="1"/>
</dbReference>
<dbReference type="Gene3D" id="2.40.50.140">
    <property type="entry name" value="Nucleic acid-binding proteins"/>
    <property type="match status" value="1"/>
</dbReference>
<dbReference type="HAMAP" id="MF_01595">
    <property type="entry name" value="PNPase"/>
    <property type="match status" value="1"/>
</dbReference>
<dbReference type="InterPro" id="IPR001247">
    <property type="entry name" value="ExoRNase_PH_dom1"/>
</dbReference>
<dbReference type="InterPro" id="IPR015847">
    <property type="entry name" value="ExoRNase_PH_dom2"/>
</dbReference>
<dbReference type="InterPro" id="IPR036345">
    <property type="entry name" value="ExoRNase_PH_dom2_sf"/>
</dbReference>
<dbReference type="InterPro" id="IPR004087">
    <property type="entry name" value="KH_dom"/>
</dbReference>
<dbReference type="InterPro" id="IPR004088">
    <property type="entry name" value="KH_dom_type_1"/>
</dbReference>
<dbReference type="InterPro" id="IPR036612">
    <property type="entry name" value="KH_dom_type_1_sf"/>
</dbReference>
<dbReference type="InterPro" id="IPR012340">
    <property type="entry name" value="NA-bd_OB-fold"/>
</dbReference>
<dbReference type="InterPro" id="IPR012162">
    <property type="entry name" value="PNPase"/>
</dbReference>
<dbReference type="InterPro" id="IPR027408">
    <property type="entry name" value="PNPase/RNase_PH_dom_sf"/>
</dbReference>
<dbReference type="InterPro" id="IPR015848">
    <property type="entry name" value="PNPase_PH_RNA-bd_bac/org-type"/>
</dbReference>
<dbReference type="InterPro" id="IPR020568">
    <property type="entry name" value="Ribosomal_Su5_D2-typ_SF"/>
</dbReference>
<dbReference type="InterPro" id="IPR003029">
    <property type="entry name" value="S1_domain"/>
</dbReference>
<dbReference type="NCBIfam" id="TIGR03591">
    <property type="entry name" value="polynuc_phos"/>
    <property type="match status" value="1"/>
</dbReference>
<dbReference type="NCBIfam" id="NF008805">
    <property type="entry name" value="PRK11824.1"/>
    <property type="match status" value="1"/>
</dbReference>
<dbReference type="PANTHER" id="PTHR11252">
    <property type="entry name" value="POLYRIBONUCLEOTIDE NUCLEOTIDYLTRANSFERASE"/>
    <property type="match status" value="1"/>
</dbReference>
<dbReference type="PANTHER" id="PTHR11252:SF0">
    <property type="entry name" value="POLYRIBONUCLEOTIDE NUCLEOTIDYLTRANSFERASE 1, MITOCHONDRIAL"/>
    <property type="match status" value="1"/>
</dbReference>
<dbReference type="Pfam" id="PF00013">
    <property type="entry name" value="KH_1"/>
    <property type="match status" value="1"/>
</dbReference>
<dbReference type="Pfam" id="PF03726">
    <property type="entry name" value="PNPase"/>
    <property type="match status" value="1"/>
</dbReference>
<dbReference type="Pfam" id="PF01138">
    <property type="entry name" value="RNase_PH"/>
    <property type="match status" value="2"/>
</dbReference>
<dbReference type="Pfam" id="PF03725">
    <property type="entry name" value="RNase_PH_C"/>
    <property type="match status" value="2"/>
</dbReference>
<dbReference type="Pfam" id="PF00575">
    <property type="entry name" value="S1"/>
    <property type="match status" value="1"/>
</dbReference>
<dbReference type="PIRSF" id="PIRSF005499">
    <property type="entry name" value="PNPase"/>
    <property type="match status" value="1"/>
</dbReference>
<dbReference type="SMART" id="SM00322">
    <property type="entry name" value="KH"/>
    <property type="match status" value="1"/>
</dbReference>
<dbReference type="SMART" id="SM00316">
    <property type="entry name" value="S1"/>
    <property type="match status" value="1"/>
</dbReference>
<dbReference type="SUPFAM" id="SSF54791">
    <property type="entry name" value="Eukaryotic type KH-domain (KH-domain type I)"/>
    <property type="match status" value="1"/>
</dbReference>
<dbReference type="SUPFAM" id="SSF50249">
    <property type="entry name" value="Nucleic acid-binding proteins"/>
    <property type="match status" value="1"/>
</dbReference>
<dbReference type="SUPFAM" id="SSF55666">
    <property type="entry name" value="Ribonuclease PH domain 2-like"/>
    <property type="match status" value="2"/>
</dbReference>
<dbReference type="SUPFAM" id="SSF54211">
    <property type="entry name" value="Ribosomal protein S5 domain 2-like"/>
    <property type="match status" value="2"/>
</dbReference>
<dbReference type="PROSITE" id="PS50084">
    <property type="entry name" value="KH_TYPE_1"/>
    <property type="match status" value="1"/>
</dbReference>
<dbReference type="PROSITE" id="PS50126">
    <property type="entry name" value="S1"/>
    <property type="match status" value="1"/>
</dbReference>